<name>RS18_STACT</name>
<feature type="chain" id="PRO_1000196529" description="Small ribosomal subunit protein bS18">
    <location>
        <begin position="1"/>
        <end position="80"/>
    </location>
</feature>
<accession>B9DIC0</accession>
<comment type="function">
    <text evidence="1">Binds as a heterodimer with protein bS6 to the central domain of the 16S rRNA, where it helps stabilize the platform of the 30S subunit.</text>
</comment>
<comment type="subunit">
    <text evidence="1">Part of the 30S ribosomal subunit. Forms a tight heterodimer with protein bS6.</text>
</comment>
<comment type="similarity">
    <text evidence="1">Belongs to the bacterial ribosomal protein bS18 family.</text>
</comment>
<keyword id="KW-1185">Reference proteome</keyword>
<keyword id="KW-0687">Ribonucleoprotein</keyword>
<keyword id="KW-0689">Ribosomal protein</keyword>
<keyword id="KW-0694">RNA-binding</keyword>
<keyword id="KW-0699">rRNA-binding</keyword>
<organism>
    <name type="scientific">Staphylococcus carnosus (strain TM300)</name>
    <dbReference type="NCBI Taxonomy" id="396513"/>
    <lineage>
        <taxon>Bacteria</taxon>
        <taxon>Bacillati</taxon>
        <taxon>Bacillota</taxon>
        <taxon>Bacilli</taxon>
        <taxon>Bacillales</taxon>
        <taxon>Staphylococcaceae</taxon>
        <taxon>Staphylococcus</taxon>
    </lineage>
</organism>
<protein>
    <recommendedName>
        <fullName evidence="1">Small ribosomal subunit protein bS18</fullName>
    </recommendedName>
    <alternativeName>
        <fullName evidence="2">30S ribosomal protein S18</fullName>
    </alternativeName>
</protein>
<reference key="1">
    <citation type="journal article" date="2009" name="Appl. Environ. Microbiol.">
        <title>Genome analysis of the meat starter culture bacterium Staphylococcus carnosus TM300.</title>
        <authorList>
            <person name="Rosenstein R."/>
            <person name="Nerz C."/>
            <person name="Biswas L."/>
            <person name="Resch A."/>
            <person name="Raddatz G."/>
            <person name="Schuster S.C."/>
            <person name="Goetz F."/>
        </authorList>
    </citation>
    <scope>NUCLEOTIDE SEQUENCE [LARGE SCALE GENOMIC DNA]</scope>
    <source>
        <strain>TM300</strain>
    </source>
</reference>
<sequence>MAGGPRRGGRRRKKVCYFTANGITHIDYKDTDLLKRFISERGKILPRRVTGTSAKYQRMLTTAIKRARHMALLPYVKEEN</sequence>
<evidence type="ECO:0000255" key="1">
    <source>
        <dbReference type="HAMAP-Rule" id="MF_00270"/>
    </source>
</evidence>
<evidence type="ECO:0000305" key="2"/>
<proteinExistence type="inferred from homology"/>
<gene>
    <name evidence="1" type="primary">rpsR</name>
    <name type="ordered locus">Sca_0028</name>
</gene>
<dbReference type="EMBL" id="AM295250">
    <property type="protein sequence ID" value="CAL26943.1"/>
    <property type="molecule type" value="Genomic_DNA"/>
</dbReference>
<dbReference type="RefSeq" id="WP_012664058.1">
    <property type="nucleotide sequence ID" value="NC_012121.1"/>
</dbReference>
<dbReference type="SMR" id="B9DIC0"/>
<dbReference type="GeneID" id="93794943"/>
<dbReference type="KEGG" id="sca:SCA_0028"/>
<dbReference type="eggNOG" id="COG0238">
    <property type="taxonomic scope" value="Bacteria"/>
</dbReference>
<dbReference type="HOGENOM" id="CLU_148710_2_2_9"/>
<dbReference type="OrthoDB" id="9812008at2"/>
<dbReference type="BioCyc" id="SCAR396513:SCA_RS00135-MONOMER"/>
<dbReference type="Proteomes" id="UP000000444">
    <property type="component" value="Chromosome"/>
</dbReference>
<dbReference type="GO" id="GO:0022627">
    <property type="term" value="C:cytosolic small ribosomal subunit"/>
    <property type="evidence" value="ECO:0007669"/>
    <property type="project" value="TreeGrafter"/>
</dbReference>
<dbReference type="GO" id="GO:0070181">
    <property type="term" value="F:small ribosomal subunit rRNA binding"/>
    <property type="evidence" value="ECO:0007669"/>
    <property type="project" value="TreeGrafter"/>
</dbReference>
<dbReference type="GO" id="GO:0003735">
    <property type="term" value="F:structural constituent of ribosome"/>
    <property type="evidence" value="ECO:0007669"/>
    <property type="project" value="InterPro"/>
</dbReference>
<dbReference type="GO" id="GO:0006412">
    <property type="term" value="P:translation"/>
    <property type="evidence" value="ECO:0007669"/>
    <property type="project" value="UniProtKB-UniRule"/>
</dbReference>
<dbReference type="FunFam" id="4.10.640.10:FF:000003">
    <property type="entry name" value="30S ribosomal protein S18"/>
    <property type="match status" value="1"/>
</dbReference>
<dbReference type="Gene3D" id="4.10.640.10">
    <property type="entry name" value="Ribosomal protein S18"/>
    <property type="match status" value="1"/>
</dbReference>
<dbReference type="HAMAP" id="MF_00270">
    <property type="entry name" value="Ribosomal_bS18"/>
    <property type="match status" value="1"/>
</dbReference>
<dbReference type="InterPro" id="IPR001648">
    <property type="entry name" value="Ribosomal_bS18"/>
</dbReference>
<dbReference type="InterPro" id="IPR018275">
    <property type="entry name" value="Ribosomal_bS18_CS"/>
</dbReference>
<dbReference type="InterPro" id="IPR036870">
    <property type="entry name" value="Ribosomal_bS18_sf"/>
</dbReference>
<dbReference type="NCBIfam" id="TIGR00165">
    <property type="entry name" value="S18"/>
    <property type="match status" value="1"/>
</dbReference>
<dbReference type="PANTHER" id="PTHR13479">
    <property type="entry name" value="30S RIBOSOMAL PROTEIN S18"/>
    <property type="match status" value="1"/>
</dbReference>
<dbReference type="PANTHER" id="PTHR13479:SF40">
    <property type="entry name" value="SMALL RIBOSOMAL SUBUNIT PROTEIN BS18M"/>
    <property type="match status" value="1"/>
</dbReference>
<dbReference type="Pfam" id="PF01084">
    <property type="entry name" value="Ribosomal_S18"/>
    <property type="match status" value="1"/>
</dbReference>
<dbReference type="PRINTS" id="PR00974">
    <property type="entry name" value="RIBOSOMALS18"/>
</dbReference>
<dbReference type="SUPFAM" id="SSF46911">
    <property type="entry name" value="Ribosomal protein S18"/>
    <property type="match status" value="1"/>
</dbReference>
<dbReference type="PROSITE" id="PS00057">
    <property type="entry name" value="RIBOSOMAL_S18"/>
    <property type="match status" value="1"/>
</dbReference>